<gene>
    <name evidence="1" type="primary">secA</name>
    <name type="ordered locus">HEAR2798</name>
</gene>
<proteinExistence type="inferred from homology"/>
<keyword id="KW-0067">ATP-binding</keyword>
<keyword id="KW-0997">Cell inner membrane</keyword>
<keyword id="KW-1003">Cell membrane</keyword>
<keyword id="KW-0963">Cytoplasm</keyword>
<keyword id="KW-0472">Membrane</keyword>
<keyword id="KW-0479">Metal-binding</keyword>
<keyword id="KW-0547">Nucleotide-binding</keyword>
<keyword id="KW-0653">Protein transport</keyword>
<keyword id="KW-1185">Reference proteome</keyword>
<keyword id="KW-1278">Translocase</keyword>
<keyword id="KW-0811">Translocation</keyword>
<keyword id="KW-0813">Transport</keyword>
<keyword id="KW-0862">Zinc</keyword>
<feature type="chain" id="PRO_0000320829" description="Protein translocase subunit SecA">
    <location>
        <begin position="1"/>
        <end position="921"/>
    </location>
</feature>
<feature type="binding site" evidence="1">
    <location>
        <position position="85"/>
    </location>
    <ligand>
        <name>ATP</name>
        <dbReference type="ChEBI" id="CHEBI:30616"/>
    </ligand>
</feature>
<feature type="binding site" evidence="1">
    <location>
        <begin position="103"/>
        <end position="107"/>
    </location>
    <ligand>
        <name>ATP</name>
        <dbReference type="ChEBI" id="CHEBI:30616"/>
    </ligand>
</feature>
<feature type="binding site" evidence="1">
    <location>
        <position position="514"/>
    </location>
    <ligand>
        <name>ATP</name>
        <dbReference type="ChEBI" id="CHEBI:30616"/>
    </ligand>
</feature>
<feature type="binding site" evidence="1">
    <location>
        <position position="905"/>
    </location>
    <ligand>
        <name>Zn(2+)</name>
        <dbReference type="ChEBI" id="CHEBI:29105"/>
    </ligand>
</feature>
<feature type="binding site" evidence="1">
    <location>
        <position position="907"/>
    </location>
    <ligand>
        <name>Zn(2+)</name>
        <dbReference type="ChEBI" id="CHEBI:29105"/>
    </ligand>
</feature>
<feature type="binding site" evidence="1">
    <location>
        <position position="916"/>
    </location>
    <ligand>
        <name>Zn(2+)</name>
        <dbReference type="ChEBI" id="CHEBI:29105"/>
    </ligand>
</feature>
<feature type="binding site" evidence="1">
    <location>
        <position position="917"/>
    </location>
    <ligand>
        <name>Zn(2+)</name>
        <dbReference type="ChEBI" id="CHEBI:29105"/>
    </ligand>
</feature>
<sequence>MSLLTQIFGSRNQRLLKQYQKTVREINALEPAMEQLSDAALQAKTPEFKERLAKGEDIDSILPEAFAVCREASKRVLKMRHFDVQLIGGMTLHYGKIAEMGTGEGKTLMATLPTYLNALTGKGVHVVTVNDYLAQRDAEWMGTLYGWLGLSTGVNMSQIDHDAKQIAYNSDITYGTNNEFGFDYLRDNMVYDTADRVQRDLHFAVVDEVDSILIDEARTPLIISGQAENHTELYHKINAVPPLLTLQIGEETPDGKGTVEVPGDYTKDEKAHQVLLTEAGHEKAEQILTRMGLLPEGASLYDAANITLIHHLYAALRAHTLYHKDQHYVVQNDEVVIVDEFTGRLMTGRRWSDGLHQAVEAKEGVRIQNENQTLASITFQNYFRMYSKLAGMTGTADTEAYEFQEIYGLETVVIPQNRPNQRKDRQDQVYKSSEEKYGAMLKDIQDCYERGQPVLVGTTSIENSELLSGILNKANLPHNVLNAKQHAREAEIIAQAGRPKAITIATNMAGRGTDIVLGGNVAKQVQIIEANDALSEAEKTAQAQKLGDEWQSLHDQVVAAGGLHIIGTERHESRRVDNQLRGRAGRQGDPGSSRFYLSLDDALLRIFAGDRVRAIMDRLKMPEGEPIEAGIVSRSIESAQRKVEARNFDIRKQLLEYDDVANDQRKVIYQQRNELLETQDVSELITSLRQGVFADLFRTYVPEQSMEEQWDLKALDEILRNEWQIDFSLAAVLEAEPNITDEEMLERLLQVTDAAYEAKVAIVGRESFAGFERGVMLQSVDSNWREHLAALDHLRQGIHLRGYAQKNPKQEYKREAFELFGQMLNLIKDAVVKTVMTVRIQSREEIDAAEEQLAQAHVENVHYQHADFDPDAAPEELLAPTAQAHEAASQPQVNTMPKVGRNDPCPCGSGKKYKQCHGRLA</sequence>
<organism>
    <name type="scientific">Herminiimonas arsenicoxydans</name>
    <dbReference type="NCBI Taxonomy" id="204773"/>
    <lineage>
        <taxon>Bacteria</taxon>
        <taxon>Pseudomonadati</taxon>
        <taxon>Pseudomonadota</taxon>
        <taxon>Betaproteobacteria</taxon>
        <taxon>Burkholderiales</taxon>
        <taxon>Oxalobacteraceae</taxon>
        <taxon>Herminiimonas</taxon>
    </lineage>
</organism>
<accession>A4G8S7</accession>
<protein>
    <recommendedName>
        <fullName evidence="1">Protein translocase subunit SecA</fullName>
        <ecNumber evidence="1">7.4.2.8</ecNumber>
    </recommendedName>
</protein>
<comment type="function">
    <text evidence="1">Part of the Sec protein translocase complex. Interacts with the SecYEG preprotein conducting channel. Has a central role in coupling the hydrolysis of ATP to the transfer of proteins into and across the cell membrane, serving both as a receptor for the preprotein-SecB complex and as an ATP-driven molecular motor driving the stepwise translocation of polypeptide chains across the membrane.</text>
</comment>
<comment type="catalytic activity">
    <reaction evidence="1">
        <text>ATP + H2O + cellular proteinSide 1 = ADP + phosphate + cellular proteinSide 2.</text>
        <dbReference type="EC" id="7.4.2.8"/>
    </reaction>
</comment>
<comment type="cofactor">
    <cofactor evidence="1">
        <name>Zn(2+)</name>
        <dbReference type="ChEBI" id="CHEBI:29105"/>
    </cofactor>
    <text evidence="1">May bind 1 zinc ion per subunit.</text>
</comment>
<comment type="subunit">
    <text evidence="1">Monomer and homodimer. Part of the essential Sec protein translocation apparatus which comprises SecA, SecYEG and auxiliary proteins SecDF-YajC and YidC.</text>
</comment>
<comment type="subcellular location">
    <subcellularLocation>
        <location evidence="1">Cell inner membrane</location>
        <topology evidence="1">Peripheral membrane protein</topology>
        <orientation evidence="1">Cytoplasmic side</orientation>
    </subcellularLocation>
    <subcellularLocation>
        <location evidence="1">Cytoplasm</location>
    </subcellularLocation>
    <text evidence="1">Distribution is 50-50.</text>
</comment>
<comment type="similarity">
    <text evidence="1">Belongs to the SecA family.</text>
</comment>
<dbReference type="EC" id="7.4.2.8" evidence="1"/>
<dbReference type="EMBL" id="CU207211">
    <property type="protein sequence ID" value="CAL62914.1"/>
    <property type="molecule type" value="Genomic_DNA"/>
</dbReference>
<dbReference type="SMR" id="A4G8S7"/>
<dbReference type="STRING" id="204773.HEAR2798"/>
<dbReference type="KEGG" id="har:HEAR2798"/>
<dbReference type="eggNOG" id="COG0653">
    <property type="taxonomic scope" value="Bacteria"/>
</dbReference>
<dbReference type="HOGENOM" id="CLU_005314_3_0_4"/>
<dbReference type="OrthoDB" id="9805579at2"/>
<dbReference type="Proteomes" id="UP000006697">
    <property type="component" value="Chromosome"/>
</dbReference>
<dbReference type="GO" id="GO:0031522">
    <property type="term" value="C:cell envelope Sec protein transport complex"/>
    <property type="evidence" value="ECO:0007669"/>
    <property type="project" value="TreeGrafter"/>
</dbReference>
<dbReference type="GO" id="GO:0005829">
    <property type="term" value="C:cytosol"/>
    <property type="evidence" value="ECO:0007669"/>
    <property type="project" value="TreeGrafter"/>
</dbReference>
<dbReference type="GO" id="GO:0005886">
    <property type="term" value="C:plasma membrane"/>
    <property type="evidence" value="ECO:0007669"/>
    <property type="project" value="UniProtKB-SubCell"/>
</dbReference>
<dbReference type="GO" id="GO:0005524">
    <property type="term" value="F:ATP binding"/>
    <property type="evidence" value="ECO:0007669"/>
    <property type="project" value="UniProtKB-UniRule"/>
</dbReference>
<dbReference type="GO" id="GO:0046872">
    <property type="term" value="F:metal ion binding"/>
    <property type="evidence" value="ECO:0007669"/>
    <property type="project" value="UniProtKB-KW"/>
</dbReference>
<dbReference type="GO" id="GO:0008564">
    <property type="term" value="F:protein-exporting ATPase activity"/>
    <property type="evidence" value="ECO:0007669"/>
    <property type="project" value="UniProtKB-EC"/>
</dbReference>
<dbReference type="GO" id="GO:0065002">
    <property type="term" value="P:intracellular protein transmembrane transport"/>
    <property type="evidence" value="ECO:0007669"/>
    <property type="project" value="UniProtKB-UniRule"/>
</dbReference>
<dbReference type="GO" id="GO:0017038">
    <property type="term" value="P:protein import"/>
    <property type="evidence" value="ECO:0007669"/>
    <property type="project" value="InterPro"/>
</dbReference>
<dbReference type="GO" id="GO:0006605">
    <property type="term" value="P:protein targeting"/>
    <property type="evidence" value="ECO:0007669"/>
    <property type="project" value="UniProtKB-UniRule"/>
</dbReference>
<dbReference type="GO" id="GO:0043952">
    <property type="term" value="P:protein transport by the Sec complex"/>
    <property type="evidence" value="ECO:0007669"/>
    <property type="project" value="TreeGrafter"/>
</dbReference>
<dbReference type="CDD" id="cd17928">
    <property type="entry name" value="DEXDc_SecA"/>
    <property type="match status" value="1"/>
</dbReference>
<dbReference type="CDD" id="cd18803">
    <property type="entry name" value="SF2_C_secA"/>
    <property type="match status" value="1"/>
</dbReference>
<dbReference type="FunFam" id="3.40.50.300:FF:000113">
    <property type="entry name" value="Preprotein translocase subunit SecA"/>
    <property type="match status" value="1"/>
</dbReference>
<dbReference type="FunFam" id="3.90.1440.10:FF:000001">
    <property type="entry name" value="Preprotein translocase subunit SecA"/>
    <property type="match status" value="1"/>
</dbReference>
<dbReference type="FunFam" id="1.10.3060.10:FF:000003">
    <property type="entry name" value="Protein translocase subunit SecA"/>
    <property type="match status" value="1"/>
</dbReference>
<dbReference type="Gene3D" id="1.10.3060.10">
    <property type="entry name" value="Helical scaffold and wing domains of SecA"/>
    <property type="match status" value="1"/>
</dbReference>
<dbReference type="Gene3D" id="3.40.50.300">
    <property type="entry name" value="P-loop containing nucleotide triphosphate hydrolases"/>
    <property type="match status" value="2"/>
</dbReference>
<dbReference type="Gene3D" id="3.90.1440.10">
    <property type="entry name" value="SecA, preprotein cross-linking domain"/>
    <property type="match status" value="1"/>
</dbReference>
<dbReference type="HAMAP" id="MF_01382">
    <property type="entry name" value="SecA"/>
    <property type="match status" value="1"/>
</dbReference>
<dbReference type="InterPro" id="IPR014001">
    <property type="entry name" value="Helicase_ATP-bd"/>
</dbReference>
<dbReference type="InterPro" id="IPR001650">
    <property type="entry name" value="Helicase_C-like"/>
</dbReference>
<dbReference type="InterPro" id="IPR027417">
    <property type="entry name" value="P-loop_NTPase"/>
</dbReference>
<dbReference type="InterPro" id="IPR004027">
    <property type="entry name" value="SEC_C_motif"/>
</dbReference>
<dbReference type="InterPro" id="IPR000185">
    <property type="entry name" value="SecA"/>
</dbReference>
<dbReference type="InterPro" id="IPR020937">
    <property type="entry name" value="SecA_CS"/>
</dbReference>
<dbReference type="InterPro" id="IPR011115">
    <property type="entry name" value="SecA_DEAD"/>
</dbReference>
<dbReference type="InterPro" id="IPR014018">
    <property type="entry name" value="SecA_motor_DEAD"/>
</dbReference>
<dbReference type="InterPro" id="IPR011130">
    <property type="entry name" value="SecA_preprotein_X-link_dom"/>
</dbReference>
<dbReference type="InterPro" id="IPR044722">
    <property type="entry name" value="SecA_SF2_C"/>
</dbReference>
<dbReference type="InterPro" id="IPR011116">
    <property type="entry name" value="SecA_Wing/Scaffold"/>
</dbReference>
<dbReference type="InterPro" id="IPR036266">
    <property type="entry name" value="SecA_Wing/Scaffold_sf"/>
</dbReference>
<dbReference type="InterPro" id="IPR036670">
    <property type="entry name" value="SecA_X-link_sf"/>
</dbReference>
<dbReference type="NCBIfam" id="NF009538">
    <property type="entry name" value="PRK12904.1"/>
    <property type="match status" value="1"/>
</dbReference>
<dbReference type="NCBIfam" id="TIGR00963">
    <property type="entry name" value="secA"/>
    <property type="match status" value="1"/>
</dbReference>
<dbReference type="PANTHER" id="PTHR30612:SF0">
    <property type="entry name" value="CHLOROPLAST PROTEIN-TRANSPORTING ATPASE"/>
    <property type="match status" value="1"/>
</dbReference>
<dbReference type="PANTHER" id="PTHR30612">
    <property type="entry name" value="SECA INNER MEMBRANE COMPONENT OF SEC PROTEIN SECRETION SYSTEM"/>
    <property type="match status" value="1"/>
</dbReference>
<dbReference type="Pfam" id="PF21090">
    <property type="entry name" value="P-loop_SecA"/>
    <property type="match status" value="1"/>
</dbReference>
<dbReference type="Pfam" id="PF02810">
    <property type="entry name" value="SEC-C"/>
    <property type="match status" value="1"/>
</dbReference>
<dbReference type="Pfam" id="PF07517">
    <property type="entry name" value="SecA_DEAD"/>
    <property type="match status" value="1"/>
</dbReference>
<dbReference type="Pfam" id="PF01043">
    <property type="entry name" value="SecA_PP_bind"/>
    <property type="match status" value="1"/>
</dbReference>
<dbReference type="Pfam" id="PF07516">
    <property type="entry name" value="SecA_SW"/>
    <property type="match status" value="1"/>
</dbReference>
<dbReference type="PRINTS" id="PR00906">
    <property type="entry name" value="SECA"/>
</dbReference>
<dbReference type="SMART" id="SM00957">
    <property type="entry name" value="SecA_DEAD"/>
    <property type="match status" value="1"/>
</dbReference>
<dbReference type="SMART" id="SM00958">
    <property type="entry name" value="SecA_PP_bind"/>
    <property type="match status" value="1"/>
</dbReference>
<dbReference type="SUPFAM" id="SSF81886">
    <property type="entry name" value="Helical scaffold and wing domains of SecA"/>
    <property type="match status" value="1"/>
</dbReference>
<dbReference type="SUPFAM" id="SSF52540">
    <property type="entry name" value="P-loop containing nucleoside triphosphate hydrolases"/>
    <property type="match status" value="2"/>
</dbReference>
<dbReference type="SUPFAM" id="SSF81767">
    <property type="entry name" value="Pre-protein crosslinking domain of SecA"/>
    <property type="match status" value="1"/>
</dbReference>
<dbReference type="PROSITE" id="PS01312">
    <property type="entry name" value="SECA"/>
    <property type="match status" value="1"/>
</dbReference>
<dbReference type="PROSITE" id="PS51196">
    <property type="entry name" value="SECA_MOTOR_DEAD"/>
    <property type="match status" value="1"/>
</dbReference>
<evidence type="ECO:0000255" key="1">
    <source>
        <dbReference type="HAMAP-Rule" id="MF_01382"/>
    </source>
</evidence>
<reference key="1">
    <citation type="journal article" date="2007" name="PLoS Genet.">
        <title>A tale of two oxidation states: bacterial colonization of arsenic-rich environments.</title>
        <authorList>
            <person name="Muller D."/>
            <person name="Medigue C."/>
            <person name="Koechler S."/>
            <person name="Barbe V."/>
            <person name="Barakat M."/>
            <person name="Talla E."/>
            <person name="Bonnefoy V."/>
            <person name="Krin E."/>
            <person name="Arsene-Ploetze F."/>
            <person name="Carapito C."/>
            <person name="Chandler M."/>
            <person name="Cournoyer B."/>
            <person name="Cruveiller S."/>
            <person name="Dossat C."/>
            <person name="Duval S."/>
            <person name="Heymann M."/>
            <person name="Leize E."/>
            <person name="Lieutaud A."/>
            <person name="Lievremont D."/>
            <person name="Makita Y."/>
            <person name="Mangenot S."/>
            <person name="Nitschke W."/>
            <person name="Ortet P."/>
            <person name="Perdrial N."/>
            <person name="Schoepp B."/>
            <person name="Siguier P."/>
            <person name="Simeonova D.D."/>
            <person name="Rouy Z."/>
            <person name="Segurens B."/>
            <person name="Turlin E."/>
            <person name="Vallenet D."/>
            <person name="van Dorsselaer A."/>
            <person name="Weiss S."/>
            <person name="Weissenbach J."/>
            <person name="Lett M.-C."/>
            <person name="Danchin A."/>
            <person name="Bertin P.N."/>
        </authorList>
    </citation>
    <scope>NUCLEOTIDE SEQUENCE [LARGE SCALE GENOMIC DNA]</scope>
    <source>
        <strain>ULPAs1</strain>
    </source>
</reference>
<name>SECA_HERAR</name>